<name>Y4609_BACTN</name>
<organism>
    <name type="scientific">Bacteroides thetaiotaomicron (strain ATCC 29148 / DSM 2079 / JCM 5827 / CCUG 10774 / NCTC 10582 / VPI-5482 / E50)</name>
    <dbReference type="NCBI Taxonomy" id="226186"/>
    <lineage>
        <taxon>Bacteria</taxon>
        <taxon>Pseudomonadati</taxon>
        <taxon>Bacteroidota</taxon>
        <taxon>Bacteroidia</taxon>
        <taxon>Bacteroidales</taxon>
        <taxon>Bacteroidaceae</taxon>
        <taxon>Bacteroides</taxon>
    </lineage>
</organism>
<accession>Q89YX1</accession>
<evidence type="ECO:0000255" key="1"/>
<evidence type="ECO:0000305" key="2"/>
<protein>
    <recommendedName>
        <fullName>UPF0324 membrane protein BT_4609</fullName>
    </recommendedName>
</protein>
<dbReference type="EMBL" id="AE015928">
    <property type="protein sequence ID" value="AAO79714.1"/>
    <property type="molecule type" value="Genomic_DNA"/>
</dbReference>
<dbReference type="RefSeq" id="NP_813520.1">
    <property type="nucleotide sequence ID" value="NC_004663.1"/>
</dbReference>
<dbReference type="RefSeq" id="WP_008764761.1">
    <property type="nucleotide sequence ID" value="NC_004663.1"/>
</dbReference>
<dbReference type="STRING" id="226186.BT_4609"/>
<dbReference type="PaxDb" id="226186-BT_4609"/>
<dbReference type="EnsemblBacteria" id="AAO79714">
    <property type="protein sequence ID" value="AAO79714"/>
    <property type="gene ID" value="BT_4609"/>
</dbReference>
<dbReference type="GeneID" id="60925783"/>
<dbReference type="KEGG" id="bth:BT_4609"/>
<dbReference type="PATRIC" id="fig|226186.12.peg.4688"/>
<dbReference type="eggNOG" id="COG2855">
    <property type="taxonomic scope" value="Bacteria"/>
</dbReference>
<dbReference type="HOGENOM" id="CLU_033541_2_0_10"/>
<dbReference type="InParanoid" id="Q89YX1"/>
<dbReference type="OrthoDB" id="9811391at2"/>
<dbReference type="Proteomes" id="UP000001414">
    <property type="component" value="Chromosome"/>
</dbReference>
<dbReference type="GO" id="GO:0005886">
    <property type="term" value="C:plasma membrane"/>
    <property type="evidence" value="ECO:0000318"/>
    <property type="project" value="GO_Central"/>
</dbReference>
<dbReference type="InterPro" id="IPR018383">
    <property type="entry name" value="UPF0324_pro"/>
</dbReference>
<dbReference type="PANTHER" id="PTHR30106">
    <property type="entry name" value="INNER MEMBRANE PROTEIN YEIH-RELATED"/>
    <property type="match status" value="1"/>
</dbReference>
<dbReference type="PANTHER" id="PTHR30106:SF1">
    <property type="entry name" value="UPF0324 MEMBRANE PROTEIN FN0533"/>
    <property type="match status" value="1"/>
</dbReference>
<dbReference type="Pfam" id="PF03601">
    <property type="entry name" value="Cons_hypoth698"/>
    <property type="match status" value="1"/>
</dbReference>
<gene>
    <name type="ordered locus">BT_4609</name>
</gene>
<proteinExistence type="inferred from homology"/>
<sequence length="330" mass="35574">MISSATKTLQTNNKTIYVAILSTLTFFLFLDYIPGLQAWSAWVTPPVALFLGLIFALTCGQAHPKFNKKTSKYLLQYSVVGLGFGMNLQSALASGKEGMEFTVISVVGTLLIGWFIGRKIFKIDRNTSYLISSGTAICGGSAIAAIGPVLRAKDSEMSVALGTIFILNAIALFIFPAIGHALDMTEHQFGTWAAIAIHDTSSVVGAGAAYGEEALKVATTIKLTRALWIIPMAFATSFIFKSKGQKISIPWFIFFFILAMIANTYLLNGVPQLGAAINGIARKTLTITMFFIGASLSLDVLRSVGVKPLIQGVLLWVVISLSTLAYIYFV</sequence>
<keyword id="KW-1003">Cell membrane</keyword>
<keyword id="KW-0472">Membrane</keyword>
<keyword id="KW-1185">Reference proteome</keyword>
<keyword id="KW-0812">Transmembrane</keyword>
<keyword id="KW-1133">Transmembrane helix</keyword>
<reference key="1">
    <citation type="journal article" date="2003" name="Science">
        <title>A genomic view of the human-Bacteroides thetaiotaomicron symbiosis.</title>
        <authorList>
            <person name="Xu J."/>
            <person name="Bjursell M.K."/>
            <person name="Himrod J."/>
            <person name="Deng S."/>
            <person name="Carmichael L.K."/>
            <person name="Chiang H.C."/>
            <person name="Hooper L.V."/>
            <person name="Gordon J.I."/>
        </authorList>
    </citation>
    <scope>NUCLEOTIDE SEQUENCE [LARGE SCALE GENOMIC DNA]</scope>
    <source>
        <strain>ATCC 29148 / DSM 2079 / JCM 5827 / CCUG 10774 / NCTC 10582 / VPI-5482 / E50</strain>
    </source>
</reference>
<feature type="chain" id="PRO_0000157392" description="UPF0324 membrane protein BT_4609">
    <location>
        <begin position="1"/>
        <end position="330"/>
    </location>
</feature>
<feature type="transmembrane region" description="Helical" evidence="1">
    <location>
        <begin position="16"/>
        <end position="33"/>
    </location>
</feature>
<feature type="transmembrane region" description="Helical" evidence="1">
    <location>
        <begin position="38"/>
        <end position="60"/>
    </location>
</feature>
<feature type="transmembrane region" description="Helical" evidence="1">
    <location>
        <begin position="73"/>
        <end position="95"/>
    </location>
</feature>
<feature type="transmembrane region" description="Helical" evidence="1">
    <location>
        <begin position="99"/>
        <end position="116"/>
    </location>
</feature>
<feature type="transmembrane region" description="Helical" evidence="1">
    <location>
        <begin position="128"/>
        <end position="150"/>
    </location>
</feature>
<feature type="transmembrane region" description="Helical" evidence="1">
    <location>
        <begin position="160"/>
        <end position="182"/>
    </location>
</feature>
<feature type="transmembrane region" description="Helical" evidence="1">
    <location>
        <begin position="189"/>
        <end position="211"/>
    </location>
</feature>
<feature type="transmembrane region" description="Helical" evidence="1">
    <location>
        <begin position="221"/>
        <end position="240"/>
    </location>
</feature>
<feature type="transmembrane region" description="Helical" evidence="1">
    <location>
        <begin position="247"/>
        <end position="269"/>
    </location>
</feature>
<feature type="transmembrane region" description="Helical" evidence="1">
    <location>
        <begin position="284"/>
        <end position="306"/>
    </location>
</feature>
<comment type="subcellular location">
    <subcellularLocation>
        <location evidence="2">Cell membrane</location>
        <topology evidence="2">Multi-pass membrane protein</topology>
    </subcellularLocation>
</comment>
<comment type="similarity">
    <text evidence="2">Belongs to the UPF0324 family.</text>
</comment>